<protein>
    <recommendedName>
        <fullName evidence="10">Stress-70 protein, mitochondrial</fullName>
        <ecNumber evidence="5">3.6.4.10</ecNumber>
    </recommendedName>
    <alternativeName>
        <fullName>75 kDa glucose-regulated protein</fullName>
        <shortName>GRP-75</shortName>
    </alternativeName>
    <alternativeName>
        <fullName>Heat shock 70 kDa protein 9</fullName>
    </alternativeName>
    <alternativeName>
        <fullName>Mortalin</fullName>
    </alternativeName>
    <alternativeName>
        <fullName>Peptide-binding protein 74</fullName>
        <shortName>PBP74</shortName>
    </alternativeName>
    <alternativeName>
        <fullName>mtHSP70</fullName>
    </alternativeName>
</protein>
<accession>P48721</accession>
<accession>F1M953</accession>
<feature type="transit peptide" description="Mitochondrion" evidence="5">
    <location>
        <begin position="1"/>
        <end position="46"/>
    </location>
</feature>
<feature type="chain" id="PRO_0000013565" description="Stress-70 protein, mitochondrial">
    <location>
        <begin position="47"/>
        <end position="679"/>
    </location>
</feature>
<feature type="region of interest" description="Interaction with NFS1" evidence="5">
    <location>
        <begin position="1"/>
        <end position="432"/>
    </location>
</feature>
<feature type="region of interest" description="Nucleotide-binding domain (NBD)" evidence="5">
    <location>
        <begin position="63"/>
        <end position="431"/>
    </location>
</feature>
<feature type="region of interest" description="Interaction with FXN and ISCU" evidence="5">
    <location>
        <begin position="432"/>
        <end position="679"/>
    </location>
</feature>
<feature type="region of interest" description="Interdomain linker" evidence="5">
    <location>
        <begin position="432"/>
        <end position="441"/>
    </location>
</feature>
<feature type="region of interest" description="Substrate-binding domain (SBD)" evidence="5">
    <location>
        <begin position="442"/>
        <end position="679"/>
    </location>
</feature>
<feature type="region of interest" description="Disordered" evidence="7">
    <location>
        <begin position="655"/>
        <end position="679"/>
    </location>
</feature>
<feature type="compositionally biased region" description="Basic and acidic residues" evidence="7">
    <location>
        <begin position="669"/>
        <end position="679"/>
    </location>
</feature>
<feature type="binding site" evidence="5">
    <location>
        <position position="63"/>
    </location>
    <ligand>
        <name>ADP</name>
        <dbReference type="ChEBI" id="CHEBI:456216"/>
    </ligand>
</feature>
<feature type="binding site" evidence="5">
    <location>
        <position position="64"/>
    </location>
    <ligand>
        <name>ADP</name>
        <dbReference type="ChEBI" id="CHEBI:456216"/>
    </ligand>
</feature>
<feature type="binding site" evidence="5">
    <location>
        <position position="313"/>
    </location>
    <ligand>
        <name>ADP</name>
        <dbReference type="ChEBI" id="CHEBI:456216"/>
    </ligand>
</feature>
<feature type="binding site" evidence="5">
    <location>
        <position position="316"/>
    </location>
    <ligand>
        <name>ADP</name>
        <dbReference type="ChEBI" id="CHEBI:456216"/>
    </ligand>
</feature>
<feature type="binding site" evidence="5">
    <location>
        <position position="320"/>
    </location>
    <ligand>
        <name>ADP</name>
        <dbReference type="ChEBI" id="CHEBI:456216"/>
    </ligand>
</feature>
<feature type="binding site" evidence="5">
    <location>
        <position position="388"/>
    </location>
    <ligand>
        <name>ADP</name>
        <dbReference type="ChEBI" id="CHEBI:456216"/>
    </ligand>
</feature>
<feature type="binding site" evidence="5">
    <location>
        <position position="391"/>
    </location>
    <ligand>
        <name>ADP</name>
        <dbReference type="ChEBI" id="CHEBI:456216"/>
    </ligand>
</feature>
<feature type="modified residue" description="N6-acetyllysine" evidence="6">
    <location>
        <position position="76"/>
    </location>
</feature>
<feature type="modified residue" description="Phosphothreonine" evidence="5">
    <location>
        <position position="87"/>
    </location>
</feature>
<feature type="modified residue" description="N6-acetyllysine; alternate" evidence="5">
    <location>
        <position position="135"/>
    </location>
</feature>
<feature type="modified residue" description="N6-succinyllysine; alternate" evidence="6">
    <location>
        <position position="135"/>
    </location>
</feature>
<feature type="modified residue" description="N6-acetyllysine; alternate" evidence="5">
    <location>
        <position position="138"/>
    </location>
</feature>
<feature type="modified residue" description="N6-succinyllysine; alternate" evidence="6">
    <location>
        <position position="138"/>
    </location>
</feature>
<feature type="modified residue" description="N6-acetyllysine" evidence="5">
    <location>
        <position position="143"/>
    </location>
</feature>
<feature type="modified residue" description="N6-acetyllysine; alternate" evidence="6">
    <location>
        <position position="206"/>
    </location>
</feature>
<feature type="modified residue" description="N6-malonyllysine; alternate" evidence="1">
    <location>
        <position position="206"/>
    </location>
</feature>
<feature type="modified residue" description="N6-succinyllysine; alternate" evidence="6">
    <location>
        <position position="206"/>
    </location>
</feature>
<feature type="modified residue" description="N6-acetyllysine" evidence="5">
    <location>
        <position position="234"/>
    </location>
</feature>
<feature type="modified residue" description="N6-acetyllysine" evidence="5">
    <location>
        <position position="288"/>
    </location>
</feature>
<feature type="modified residue" description="N6-acetyllysine; alternate" evidence="5">
    <location>
        <position position="300"/>
    </location>
</feature>
<feature type="modified residue" description="N6-succinyllysine; alternate" evidence="6">
    <location>
        <position position="300"/>
    </location>
</feature>
<feature type="modified residue" description="N6-acetyllysine; alternate" evidence="6">
    <location>
        <position position="360"/>
    </location>
</feature>
<feature type="modified residue" description="N6-succinyllysine; alternate" evidence="6">
    <location>
        <position position="360"/>
    </location>
</feature>
<feature type="modified residue" description="N6-succinyllysine" evidence="6">
    <location>
        <position position="368"/>
    </location>
</feature>
<feature type="modified residue" description="N6-succinyllysine" evidence="6">
    <location>
        <position position="394"/>
    </location>
</feature>
<feature type="modified residue" description="Phosphoserine" evidence="5">
    <location>
        <position position="408"/>
    </location>
</feature>
<feature type="modified residue" description="Omega-N-methylarginine" evidence="5">
    <location>
        <position position="513"/>
    </location>
</feature>
<feature type="modified residue" description="N6-acetyllysine; alternate" evidence="5">
    <location>
        <position position="567"/>
    </location>
</feature>
<feature type="modified residue" description="N6-succinyllysine; alternate" evidence="6">
    <location>
        <position position="567"/>
    </location>
</feature>
<feature type="modified residue" description="N6-acetyllysine; alternate" evidence="6">
    <location>
        <position position="600"/>
    </location>
</feature>
<feature type="modified residue" description="N6-succinyllysine; alternate" evidence="6">
    <location>
        <position position="600"/>
    </location>
</feature>
<feature type="modified residue" description="N6-succinyllysine" evidence="6">
    <location>
        <position position="610"/>
    </location>
</feature>
<feature type="modified residue" description="N6-acetyllysine" evidence="6">
    <location>
        <position position="612"/>
    </location>
</feature>
<feature type="modified residue" description="N6-acetyllysine; alternate" evidence="5">
    <location>
        <position position="646"/>
    </location>
</feature>
<feature type="modified residue" description="N6-succinyllysine; alternate" evidence="6">
    <location>
        <position position="646"/>
    </location>
</feature>
<feature type="sequence conflict" description="In Ref. 1; AAB33049." evidence="10" ref="1">
    <original>A</original>
    <variation>V</variation>
    <location>
        <position position="37"/>
    </location>
</feature>
<feature type="sequence conflict" description="In Ref. 1; AAB33049." evidence="10" ref="1">
    <original>A</original>
    <variation>S</variation>
    <location>
        <position position="81"/>
    </location>
</feature>
<feature type="sequence conflict" description="In Ref. 1; AAB33049." evidence="10" ref="1">
    <original>A</original>
    <variation>R</variation>
    <location>
        <position position="373"/>
    </location>
</feature>
<feature type="sequence conflict" description="In Ref. 4; AA sequence." evidence="10" ref="4">
    <original>C</original>
    <variation>T</variation>
    <location>
        <position position="487"/>
    </location>
</feature>
<feature type="sequence conflict" description="In Ref. 4; AA sequence." evidence="10" ref="4">
    <original>M</original>
    <variation>Q</variation>
    <location>
        <position position="493"/>
    </location>
</feature>
<feature type="sequence conflict" description="In Ref. 1; AAB33049." evidence="10" ref="1">
    <original>I</original>
    <variation>V</variation>
    <location>
        <position position="589"/>
    </location>
</feature>
<proteinExistence type="evidence at protein level"/>
<gene>
    <name evidence="11" type="primary">Hspa9</name>
    <name type="synonym">Grp75</name>
    <name type="synonym">Hspa9a</name>
</gene>
<keyword id="KW-0007">Acetylation</keyword>
<keyword id="KW-0067">ATP-binding</keyword>
<keyword id="KW-0143">Chaperone</keyword>
<keyword id="KW-0963">Cytoplasm</keyword>
<keyword id="KW-0903">Direct protein sequencing</keyword>
<keyword id="KW-0378">Hydrolase</keyword>
<keyword id="KW-0488">Methylation</keyword>
<keyword id="KW-0496">Mitochondrion</keyword>
<keyword id="KW-0547">Nucleotide-binding</keyword>
<keyword id="KW-0539">Nucleus</keyword>
<keyword id="KW-0597">Phosphoprotein</keyword>
<keyword id="KW-1185">Reference proteome</keyword>
<keyword id="KW-0809">Transit peptide</keyword>
<reference key="1">
    <citation type="journal article" date="1994" name="DNA Cell Biol.">
        <title>cDNA cloning and efficient mitochondrial import of pre-mtHSP70 from rat liver.</title>
        <authorList>
            <person name="Webster T.J."/>
            <person name="Naylor D.J."/>
            <person name="Hartman D.J."/>
            <person name="Hoej P.B."/>
            <person name="Hoogenraad N.J."/>
        </authorList>
    </citation>
    <scope>NUCLEOTIDE SEQUENCE [MRNA]</scope>
    <scope>SUBCELLULAR LOCATION</scope>
</reference>
<reference key="2">
    <citation type="journal article" date="1995" name="J. Neurosci. Res.">
        <title>Cloning of rat grp75, an hsp70-family member, and its expression in normal and ischemic brain.</title>
        <authorList>
            <person name="Massa S.M."/>
            <person name="Longo F.M."/>
            <person name="Zuo J."/>
            <person name="Wang S."/>
            <person name="Chen J."/>
            <person name="Sharp F.R."/>
        </authorList>
    </citation>
    <scope>NUCLEOTIDE SEQUENCE [MRNA]</scope>
</reference>
<reference key="3">
    <citation type="journal article" date="2004" name="Nature">
        <title>Genome sequence of the Brown Norway rat yields insights into mammalian evolution.</title>
        <authorList>
            <person name="Gibbs R.A."/>
            <person name="Weinstock G.M."/>
            <person name="Metzker M.L."/>
            <person name="Muzny D.M."/>
            <person name="Sodergren E.J."/>
            <person name="Scherer S."/>
            <person name="Scott G."/>
            <person name="Steffen D."/>
            <person name="Worley K.C."/>
            <person name="Burch P.E."/>
            <person name="Okwuonu G."/>
            <person name="Hines S."/>
            <person name="Lewis L."/>
            <person name="Deramo C."/>
            <person name="Delgado O."/>
            <person name="Dugan-Rocha S."/>
            <person name="Miner G."/>
            <person name="Morgan M."/>
            <person name="Hawes A."/>
            <person name="Gill R."/>
            <person name="Holt R.A."/>
            <person name="Adams M.D."/>
            <person name="Amanatides P.G."/>
            <person name="Baden-Tillson H."/>
            <person name="Barnstead M."/>
            <person name="Chin S."/>
            <person name="Evans C.A."/>
            <person name="Ferriera S."/>
            <person name="Fosler C."/>
            <person name="Glodek A."/>
            <person name="Gu Z."/>
            <person name="Jennings D."/>
            <person name="Kraft C.L."/>
            <person name="Nguyen T."/>
            <person name="Pfannkoch C.M."/>
            <person name="Sitter C."/>
            <person name="Sutton G.G."/>
            <person name="Venter J.C."/>
            <person name="Woodage T."/>
            <person name="Smith D."/>
            <person name="Lee H.-M."/>
            <person name="Gustafson E."/>
            <person name="Cahill P."/>
            <person name="Kana A."/>
            <person name="Doucette-Stamm L."/>
            <person name="Weinstock K."/>
            <person name="Fechtel K."/>
            <person name="Weiss R.B."/>
            <person name="Dunn D.M."/>
            <person name="Green E.D."/>
            <person name="Blakesley R.W."/>
            <person name="Bouffard G.G."/>
            <person name="De Jong P.J."/>
            <person name="Osoegawa K."/>
            <person name="Zhu B."/>
            <person name="Marra M."/>
            <person name="Schein J."/>
            <person name="Bosdet I."/>
            <person name="Fjell C."/>
            <person name="Jones S."/>
            <person name="Krzywinski M."/>
            <person name="Mathewson C."/>
            <person name="Siddiqui A."/>
            <person name="Wye N."/>
            <person name="McPherson J."/>
            <person name="Zhao S."/>
            <person name="Fraser C.M."/>
            <person name="Shetty J."/>
            <person name="Shatsman S."/>
            <person name="Geer K."/>
            <person name="Chen Y."/>
            <person name="Abramzon S."/>
            <person name="Nierman W.C."/>
            <person name="Havlak P.H."/>
            <person name="Chen R."/>
            <person name="Durbin K.J."/>
            <person name="Egan A."/>
            <person name="Ren Y."/>
            <person name="Song X.-Z."/>
            <person name="Li B."/>
            <person name="Liu Y."/>
            <person name="Qin X."/>
            <person name="Cawley S."/>
            <person name="Cooney A.J."/>
            <person name="D'Souza L.M."/>
            <person name="Martin K."/>
            <person name="Wu J.Q."/>
            <person name="Gonzalez-Garay M.L."/>
            <person name="Jackson A.R."/>
            <person name="Kalafus K.J."/>
            <person name="McLeod M.P."/>
            <person name="Milosavljevic A."/>
            <person name="Virk D."/>
            <person name="Volkov A."/>
            <person name="Wheeler D.A."/>
            <person name="Zhang Z."/>
            <person name="Bailey J.A."/>
            <person name="Eichler E.E."/>
            <person name="Tuzun E."/>
            <person name="Birney E."/>
            <person name="Mongin E."/>
            <person name="Ureta-Vidal A."/>
            <person name="Woodwark C."/>
            <person name="Zdobnov E."/>
            <person name="Bork P."/>
            <person name="Suyama M."/>
            <person name="Torrents D."/>
            <person name="Alexandersson M."/>
            <person name="Trask B.J."/>
            <person name="Young J.M."/>
            <person name="Huang H."/>
            <person name="Wang H."/>
            <person name="Xing H."/>
            <person name="Daniels S."/>
            <person name="Gietzen D."/>
            <person name="Schmidt J."/>
            <person name="Stevens K."/>
            <person name="Vitt U."/>
            <person name="Wingrove J."/>
            <person name="Camara F."/>
            <person name="Mar Alba M."/>
            <person name="Abril J.F."/>
            <person name="Guigo R."/>
            <person name="Smit A."/>
            <person name="Dubchak I."/>
            <person name="Rubin E.M."/>
            <person name="Couronne O."/>
            <person name="Poliakov A."/>
            <person name="Huebner N."/>
            <person name="Ganten D."/>
            <person name="Goesele C."/>
            <person name="Hummel O."/>
            <person name="Kreitler T."/>
            <person name="Lee Y.-A."/>
            <person name="Monti J."/>
            <person name="Schulz H."/>
            <person name="Zimdahl H."/>
            <person name="Himmelbauer H."/>
            <person name="Lehrach H."/>
            <person name="Jacob H.J."/>
            <person name="Bromberg S."/>
            <person name="Gullings-Handley J."/>
            <person name="Jensen-Seaman M.I."/>
            <person name="Kwitek A.E."/>
            <person name="Lazar J."/>
            <person name="Pasko D."/>
            <person name="Tonellato P.J."/>
            <person name="Twigger S."/>
            <person name="Ponting C.P."/>
            <person name="Duarte J.M."/>
            <person name="Rice S."/>
            <person name="Goodstadt L."/>
            <person name="Beatson S.A."/>
            <person name="Emes R.D."/>
            <person name="Winter E.E."/>
            <person name="Webber C."/>
            <person name="Brandt P."/>
            <person name="Nyakatura G."/>
            <person name="Adetobi M."/>
            <person name="Chiaromonte F."/>
            <person name="Elnitski L."/>
            <person name="Eswara P."/>
            <person name="Hardison R.C."/>
            <person name="Hou M."/>
            <person name="Kolbe D."/>
            <person name="Makova K."/>
            <person name="Miller W."/>
            <person name="Nekrutenko A."/>
            <person name="Riemer C."/>
            <person name="Schwartz S."/>
            <person name="Taylor J."/>
            <person name="Yang S."/>
            <person name="Zhang Y."/>
            <person name="Lindpaintner K."/>
            <person name="Andrews T.D."/>
            <person name="Caccamo M."/>
            <person name="Clamp M."/>
            <person name="Clarke L."/>
            <person name="Curwen V."/>
            <person name="Durbin R.M."/>
            <person name="Eyras E."/>
            <person name="Searle S.M."/>
            <person name="Cooper G.M."/>
            <person name="Batzoglou S."/>
            <person name="Brudno M."/>
            <person name="Sidow A."/>
            <person name="Stone E.A."/>
            <person name="Payseur B.A."/>
            <person name="Bourque G."/>
            <person name="Lopez-Otin C."/>
            <person name="Puente X.S."/>
            <person name="Chakrabarti K."/>
            <person name="Chatterji S."/>
            <person name="Dewey C."/>
            <person name="Pachter L."/>
            <person name="Bray N."/>
            <person name="Yap V.B."/>
            <person name="Caspi A."/>
            <person name="Tesler G."/>
            <person name="Pevzner P.A."/>
            <person name="Haussler D."/>
            <person name="Roskin K.M."/>
            <person name="Baertsch R."/>
            <person name="Clawson H."/>
            <person name="Furey T.S."/>
            <person name="Hinrichs A.S."/>
            <person name="Karolchik D."/>
            <person name="Kent W.J."/>
            <person name="Rosenbloom K.R."/>
            <person name="Trumbower H."/>
            <person name="Weirauch M."/>
            <person name="Cooper D.N."/>
            <person name="Stenson P.D."/>
            <person name="Ma B."/>
            <person name="Brent M."/>
            <person name="Arumugam M."/>
            <person name="Shteynberg D."/>
            <person name="Copley R.R."/>
            <person name="Taylor M.S."/>
            <person name="Riethman H."/>
            <person name="Mudunuri U."/>
            <person name="Peterson J."/>
            <person name="Guyer M."/>
            <person name="Felsenfeld A."/>
            <person name="Old S."/>
            <person name="Mockrin S."/>
            <person name="Collins F.S."/>
        </authorList>
    </citation>
    <scope>NUCLEOTIDE SEQUENCE [LARGE SCALE GENOMIC DNA]</scope>
    <source>
        <strain>Brown Norway</strain>
    </source>
</reference>
<reference key="4">
    <citation type="journal article" date="1990" name="Biochem. Biophys. Res. Commun.">
        <title>A microsequencing approach to identify proteins which appear to interact with thyrotropin in rat FRTL-5 thyroid cells.</title>
        <authorList>
            <person name="Akamizu T."/>
            <person name="Saji M."/>
            <person name="Kohn L.D."/>
        </authorList>
    </citation>
    <scope>PROTEIN SEQUENCE OF 80-98 AND 484-503</scope>
</reference>
<reference key="5">
    <citation type="submission" date="2006-11" db="UniProtKB">
        <authorList>
            <person name="Lubec G."/>
            <person name="Vishwanath V."/>
            <person name="Afjehi-Sadat L."/>
        </authorList>
    </citation>
    <scope>PROTEIN SEQUENCE OF 188-202; 266-284; 499-513 AND 577-595</scope>
    <scope>IDENTIFICATION BY MASS SPECTROMETRY</scope>
    <source>
        <strain>Sprague-Dawley</strain>
        <tissue>Spinal cord</tissue>
    </source>
</reference>
<reference key="6">
    <citation type="journal article" date="2006" name="J. Cell Biol.">
        <title>Chaperone-mediated coupling of endoplasmic reticulum and mitochondrial Ca2+ channels.</title>
        <authorList>
            <person name="Szabadkai G."/>
            <person name="Bianchi K."/>
            <person name="Varnai P."/>
            <person name="De Stefani D."/>
            <person name="Wieckowski M.R."/>
            <person name="Cavagna D."/>
            <person name="Nagy A.I."/>
            <person name="Balla T."/>
            <person name="Rizzuto R."/>
        </authorList>
    </citation>
    <scope>INTERACTION WITH ITPR1 AND VDAC1</scope>
    <scope>SUBCELLULAR LOCATION</scope>
</reference>
<sequence>MISASRAAAARLVGTTASRSPAAARHQDGWNGLSHEAFRFVSRRDYASEAIKGAVVGIDLGTTNSCVAVMEGKQAKVLENAEGARTTPSVVAFTPDGERLVGMPAKRQAVTNPNNTFYATKRLIGRRYDDPEVQKDTKNVPFKIVRASNGDAWVEAHGKLYSPSQIGAFVLMKMKETAENYLGHTAKNAVITVPAYFNDSQRQATKDAGQISGLNVLRVINEPTAAALAYGLDKSEDKVIAVYDLGGGTFDISILEIQKGVFEVKSTNGDTFLGGEDFDQALLRHIVKEFKRETGVDLTKDNMALQRVREAAEKAKCELSSSVQTDINLPYLTMDASGPKHLNMKLTRAQFEGIVTDLIKRTIAPCQKAMQDAEVSKSDIGEVILVGGMTRMPKVQQTVQDLFGRAPSKAVNPDEAVAIGAAIQGGVLAGDVTDVLLLDVTPLSLGIETLGGVFTKLINRNTTIPTKKSQVFSTAADGQTQVEIKVCQGEREMAGDNKLLGQFTLIGIPPAPRGVPQIEVTFDIDANGIVHVSAKDKGTGREQQIVIQSSGGLSKDDIENMVKNAEKYAEEDRRKKERVEAVNMAEGIIHDTETKMEEFKDQLPADECNKLKEEISKMRELLARKDSETGENIRQAASSLQQASLKLFEMAYKKMASEREGSGSSSTGEQKEDQKEEKQ</sequence>
<evidence type="ECO:0000250" key="1"/>
<evidence type="ECO:0000250" key="2">
    <source>
        <dbReference type="UniProtKB" id="P0CS90"/>
    </source>
</evidence>
<evidence type="ECO:0000250" key="3">
    <source>
        <dbReference type="UniProtKB" id="P0DMV8"/>
    </source>
</evidence>
<evidence type="ECO:0000250" key="4">
    <source>
        <dbReference type="UniProtKB" id="P11021"/>
    </source>
</evidence>
<evidence type="ECO:0000250" key="5">
    <source>
        <dbReference type="UniProtKB" id="P38646"/>
    </source>
</evidence>
<evidence type="ECO:0000250" key="6">
    <source>
        <dbReference type="UniProtKB" id="P38647"/>
    </source>
</evidence>
<evidence type="ECO:0000256" key="7">
    <source>
        <dbReference type="SAM" id="MobiDB-lite"/>
    </source>
</evidence>
<evidence type="ECO:0000269" key="8">
    <source>
    </source>
</evidence>
<evidence type="ECO:0000269" key="9">
    <source>
    </source>
</evidence>
<evidence type="ECO:0000305" key="10"/>
<evidence type="ECO:0000312" key="11">
    <source>
        <dbReference type="RGD" id="1311806"/>
    </source>
</evidence>
<name>HSPA9_RAT</name>
<comment type="function">
    <text evidence="2 5 6">Mitochondrial chaperone that plays a key role in mitochondrial protein import, folding, and assembly. Plays an essential role in the protein quality control system, the correct folding of proteins, the re-folding of misfolded proteins, and the targeting of proteins for subsequent degradation. These processes are achieved through cycles of ATP binding, ATP hydrolysis, and ADP release, mediated by co-chaperones. In mitochondria, it associates with the TIM (translocase of the inner membrane) protein complex to assist in the import and folding of mitochondrial proteins (By similarity). Plays an important role in mitochondrial iron-sulfur cluster (ISC) biogenesis, interacts with and stabilizes ISC cluster assembly proteins FXN, NFU1, NFS1 and ISCU. Regulates erythropoiesis via stabilization of ISC assembly. Regulates mitochondrial calcium-dependent apoptosis by coupling two calcium channels, ITPR1 and VDAC1, at the mitochondria-associated endoplasmic reticulum (ER) membrane to facilitate calcium transport from the ER lumen to the mitochondria intermembrane space, providing calcium for the downstream calcium channel MCU, which releases it into the mitochondrial matrix (By similarity). Although primarily located in the mitochondria, it is also found in other cellular compartments. In the cytosol, it associates with proteins involved in signaling, apoptosis, or senescence. It may play a role in cell cycle regulation via its interaction with and promotion of degradation of TP53 (By similarity). May play a role in the control of cell proliferation and cellular aging (By similarity). Protects against reactive oxygen species (ROS) (By similarity). Extracellular HSPA9 plays a cytoprotective role by preventing cell lysis following immune attack by the membrane attack complex by disrupting formation of the complex (By similarity).</text>
</comment>
<comment type="catalytic activity">
    <reaction evidence="5">
        <text>ATP + H2O = ADP + phosphate + H(+)</text>
        <dbReference type="Rhea" id="RHEA:13065"/>
        <dbReference type="ChEBI" id="CHEBI:15377"/>
        <dbReference type="ChEBI" id="CHEBI:15378"/>
        <dbReference type="ChEBI" id="CHEBI:30616"/>
        <dbReference type="ChEBI" id="CHEBI:43474"/>
        <dbReference type="ChEBI" id="CHEBI:456216"/>
        <dbReference type="EC" id="3.6.4.10"/>
    </reaction>
    <physiologicalReaction direction="left-to-right" evidence="5">
        <dbReference type="Rhea" id="RHEA:13066"/>
    </physiologicalReaction>
</comment>
<comment type="activity regulation">
    <text evidence="4 5">The chaperone activity is regulated by ATP-induced allosteric coupling of the nucleotide-binding (NBD) and substrate-binding (SBD) domains. ATP binding in the nucleotide-binding pocket (NBP) leads to a conformational change in the NBD, which is transferred through the interdomain linker (IDL) to the substrate-binding domain (SBD). This elicits a reduced substrate affinity and a faster substrate exchange rate. Upon hydrolysis of ATP to ADP, the protein undergoes a conformational change that increases its affinity for substrate proteins. It cycles through repeated phases of ATP hydrolysis and nucleotide exchange, facilitating repeated cycles of substrate binding and release (By similarity). Functions in collaboration with co-chaperones. Functions with the co-chaperone, DNLZ, to maintain solubility and regulate ATP hydrolysis. Nucleotide exchange factors, GRPEL1 and GRPEL2, accelerate nucleotide exchange (By similarity).</text>
</comment>
<comment type="subunit">
    <text evidence="5 8">Interacts strongly with the intermediate form of FXN and weakly with its mature form. Interacts with HSCB. Associates with the mitochondrial contact site and cristae organizing system (MICOS) complex, composed of at least MICOS10/MIC10, CHCHD3/MIC19, CHCHD6/MIC25, APOOL/MIC27, IMMT/MIC60, APOO/MIC23/MIC26 and QIL1/MIC13. This complex was also known under the names MINOS or MitOS complex. The MICOS complex associates with mitochondrial outer membrane proteins SAMM50, MTX1, MTX2 and DNAJC11, mitochondrial inner membrane protein TMEM11 and with HSPA9. Interacts with DNLZ, the interaction is required to prevent self-aggregation. Interacts with TESPA1. Interacts with PDPN. Interacts with NFU1, NFS1 and ISCU. Interacts with TP53; the interaction promotes TP53 degradation (By similarity). Interacts (via SBD domain) with UBXN2A; the interaction with UBXN2A inhibits HSPA9 interaction with and degradation of TP53, thereby promotes TP53 translocation to the nucleus (By similarity). Interacts with ITPR1 AND VDAC1; this interaction couples ITPR1 to VDAC1 (PubMed:17178908). Component of the TIM23 mitochondrial inner membrane pre-sequence translocase complex (By similarity).</text>
</comment>
<comment type="subcellular location">
    <subcellularLocation>
        <location evidence="9">Mitochondrion</location>
    </subcellularLocation>
    <subcellularLocation>
        <location evidence="5">Nucleus</location>
        <location evidence="5">Nucleolus</location>
    </subcellularLocation>
    <subcellularLocation>
        <location evidence="8">Cytoplasm</location>
    </subcellularLocation>
    <subcellularLocation>
        <location evidence="8">Mitochondrion matrix</location>
    </subcellularLocation>
    <text evidence="8">Found in a complex with HSPA9 and VDAC1 at the endoplasmic reticulum-mitochondria contact sites.</text>
</comment>
<comment type="domain">
    <text evidence="3">The N-terminal nucleotide binding domain (NBD) is responsible for binding and hydrolyzing ATP. The C-terminal substrate-binding domain (SBD) binds to the client/substrate proteins. The two domains are allosterically coupled so that, when ATP is bound to the NBD, the SBD binds relatively weakly to clients. When ADP is bound in the NBD, a conformational change enhances the affinity of the SBD for client proteins.</text>
</comment>
<comment type="similarity">
    <text evidence="10">Belongs to the heat shock protein 70 family.</text>
</comment>
<organism>
    <name type="scientific">Rattus norvegicus</name>
    <name type="common">Rat</name>
    <dbReference type="NCBI Taxonomy" id="10116"/>
    <lineage>
        <taxon>Eukaryota</taxon>
        <taxon>Metazoa</taxon>
        <taxon>Chordata</taxon>
        <taxon>Craniata</taxon>
        <taxon>Vertebrata</taxon>
        <taxon>Euteleostomi</taxon>
        <taxon>Mammalia</taxon>
        <taxon>Eutheria</taxon>
        <taxon>Euarchontoglires</taxon>
        <taxon>Glires</taxon>
        <taxon>Rodentia</taxon>
        <taxon>Myomorpha</taxon>
        <taxon>Muroidea</taxon>
        <taxon>Muridae</taxon>
        <taxon>Murinae</taxon>
        <taxon>Rattus</taxon>
    </lineage>
</organism>
<dbReference type="EC" id="3.6.4.10" evidence="5"/>
<dbReference type="EMBL" id="S75280">
    <property type="protein sequence ID" value="AAB33049.1"/>
    <property type="molecule type" value="mRNA"/>
</dbReference>
<dbReference type="EMBL" id="S78556">
    <property type="protein sequence ID" value="AAB34982.1"/>
    <property type="molecule type" value="mRNA"/>
</dbReference>
<dbReference type="EMBL" id="AC118806">
    <property type="status" value="NOT_ANNOTATED_CDS"/>
    <property type="molecule type" value="Genomic_DNA"/>
</dbReference>
<dbReference type="PIR" id="I56581">
    <property type="entry name" value="I56581"/>
</dbReference>
<dbReference type="RefSeq" id="NP_001094128.2">
    <property type="nucleotide sequence ID" value="NM_001100658.2"/>
</dbReference>
<dbReference type="RefSeq" id="XP_063133287.1">
    <property type="nucleotide sequence ID" value="XM_063277217.1"/>
</dbReference>
<dbReference type="SMR" id="P48721"/>
<dbReference type="CORUM" id="P48721"/>
<dbReference type="FunCoup" id="P48721">
    <property type="interactions" value="3084"/>
</dbReference>
<dbReference type="IntAct" id="P48721">
    <property type="interactions" value="5"/>
</dbReference>
<dbReference type="MINT" id="P48721"/>
<dbReference type="STRING" id="10116.ENSRNOP00000026696"/>
<dbReference type="CarbonylDB" id="P48721"/>
<dbReference type="GlyGen" id="P48721">
    <property type="glycosylation" value="1 site, 1 O-linked glycan (1 site)"/>
</dbReference>
<dbReference type="iPTMnet" id="P48721"/>
<dbReference type="PhosphoSitePlus" id="P48721"/>
<dbReference type="SwissPalm" id="P48721"/>
<dbReference type="jPOST" id="P48721"/>
<dbReference type="PaxDb" id="10116-ENSRNOP00000026696"/>
<dbReference type="ABCD" id="P48721">
    <property type="antibodies" value="1 sequenced antibody"/>
</dbReference>
<dbReference type="Ensembl" id="ENSRNOT00000026696.7">
    <property type="protein sequence ID" value="ENSRNOP00000026696.4"/>
    <property type="gene ID" value="ENSRNOG00000019525.7"/>
</dbReference>
<dbReference type="Ensembl" id="ENSRNOT00055039681">
    <property type="protein sequence ID" value="ENSRNOP00055032218"/>
    <property type="gene ID" value="ENSRNOG00055023054"/>
</dbReference>
<dbReference type="Ensembl" id="ENSRNOT00060045818">
    <property type="protein sequence ID" value="ENSRNOP00060038018"/>
    <property type="gene ID" value="ENSRNOG00060026210"/>
</dbReference>
<dbReference type="Ensembl" id="ENSRNOT00065020496">
    <property type="protein sequence ID" value="ENSRNOP00065015749"/>
    <property type="gene ID" value="ENSRNOG00065012591"/>
</dbReference>
<dbReference type="GeneID" id="291671"/>
<dbReference type="KEGG" id="rno:291671"/>
<dbReference type="UCSC" id="RGD:1311806">
    <property type="organism name" value="rat"/>
</dbReference>
<dbReference type="AGR" id="RGD:1311806"/>
<dbReference type="CTD" id="3313"/>
<dbReference type="RGD" id="1311806">
    <property type="gene designation" value="Hspa9"/>
</dbReference>
<dbReference type="eggNOG" id="KOG0102">
    <property type="taxonomic scope" value="Eukaryota"/>
</dbReference>
<dbReference type="GeneTree" id="ENSGT00920000149123"/>
<dbReference type="HOGENOM" id="CLU_005965_2_1_1"/>
<dbReference type="InParanoid" id="P48721"/>
<dbReference type="OMA" id="MGTDWKI"/>
<dbReference type="OrthoDB" id="143at2759"/>
<dbReference type="PhylomeDB" id="P48721"/>
<dbReference type="TreeFam" id="TF105046"/>
<dbReference type="Reactome" id="R-RNO-3371453">
    <property type="pathway name" value="Regulation of HSF1-mediated heat shock response"/>
</dbReference>
<dbReference type="Reactome" id="R-RNO-6799198">
    <property type="pathway name" value="Complex I biogenesis"/>
</dbReference>
<dbReference type="Reactome" id="R-RNO-9837999">
    <property type="pathway name" value="Mitochondrial protein degradation"/>
</dbReference>
<dbReference type="Reactome" id="R-RNO-9865881">
    <property type="pathway name" value="Complex III assembly"/>
</dbReference>
<dbReference type="PRO" id="PR:P48721"/>
<dbReference type="Proteomes" id="UP000002494">
    <property type="component" value="Chromosome 18"/>
</dbReference>
<dbReference type="Bgee" id="ENSRNOG00000019525">
    <property type="expression patterns" value="Expressed in heart and 18 other cell types or tissues"/>
</dbReference>
<dbReference type="GO" id="GO:0005737">
    <property type="term" value="C:cytoplasm"/>
    <property type="evidence" value="ECO:0000314"/>
    <property type="project" value="UniProtKB"/>
</dbReference>
<dbReference type="GO" id="GO:0005759">
    <property type="term" value="C:mitochondrial matrix"/>
    <property type="evidence" value="ECO:0000314"/>
    <property type="project" value="UniProtKB"/>
</dbReference>
<dbReference type="GO" id="GO:0042645">
    <property type="term" value="C:mitochondrial nucleoid"/>
    <property type="evidence" value="ECO:0007669"/>
    <property type="project" value="Ensembl"/>
</dbReference>
<dbReference type="GO" id="GO:0005739">
    <property type="term" value="C:mitochondrion"/>
    <property type="evidence" value="ECO:0000266"/>
    <property type="project" value="RGD"/>
</dbReference>
<dbReference type="GO" id="GO:0005730">
    <property type="term" value="C:nucleolus"/>
    <property type="evidence" value="ECO:0007669"/>
    <property type="project" value="UniProtKB-SubCell"/>
</dbReference>
<dbReference type="GO" id="GO:0005524">
    <property type="term" value="F:ATP binding"/>
    <property type="evidence" value="ECO:0007669"/>
    <property type="project" value="UniProtKB-KW"/>
</dbReference>
<dbReference type="GO" id="GO:0016887">
    <property type="term" value="F:ATP hydrolysis activity"/>
    <property type="evidence" value="ECO:0007669"/>
    <property type="project" value="Ensembl"/>
</dbReference>
<dbReference type="GO" id="GO:0140662">
    <property type="term" value="F:ATP-dependent protein folding chaperone"/>
    <property type="evidence" value="ECO:0007669"/>
    <property type="project" value="InterPro"/>
</dbReference>
<dbReference type="GO" id="GO:0019899">
    <property type="term" value="F:enzyme binding"/>
    <property type="evidence" value="ECO:0000266"/>
    <property type="project" value="RGD"/>
</dbReference>
<dbReference type="GO" id="GO:0017134">
    <property type="term" value="F:fibroblast growth factor binding"/>
    <property type="evidence" value="ECO:0000353"/>
    <property type="project" value="RGD"/>
</dbReference>
<dbReference type="GO" id="GO:0031072">
    <property type="term" value="F:heat shock protein binding"/>
    <property type="evidence" value="ECO:0000353"/>
    <property type="project" value="RGD"/>
</dbReference>
<dbReference type="GO" id="GO:0044183">
    <property type="term" value="F:protein folding chaperone"/>
    <property type="evidence" value="ECO:0000318"/>
    <property type="project" value="GO_Central"/>
</dbReference>
<dbReference type="GO" id="GO:0051087">
    <property type="term" value="F:protein-folding chaperone binding"/>
    <property type="evidence" value="ECO:0000353"/>
    <property type="project" value="RGD"/>
</dbReference>
<dbReference type="GO" id="GO:0031625">
    <property type="term" value="F:ubiquitin protein ligase binding"/>
    <property type="evidence" value="ECO:0007669"/>
    <property type="project" value="Ensembl"/>
</dbReference>
<dbReference type="GO" id="GO:0051082">
    <property type="term" value="F:unfolded protein binding"/>
    <property type="evidence" value="ECO:0007669"/>
    <property type="project" value="InterPro"/>
</dbReference>
<dbReference type="GO" id="GO:0036444">
    <property type="term" value="P:calcium import into the mitochondrion"/>
    <property type="evidence" value="ECO:0000315"/>
    <property type="project" value="UniProtKB"/>
</dbReference>
<dbReference type="GO" id="GO:0071347">
    <property type="term" value="P:cellular response to interleukin-1"/>
    <property type="evidence" value="ECO:0000270"/>
    <property type="project" value="RGD"/>
</dbReference>
<dbReference type="GO" id="GO:0051085">
    <property type="term" value="P:chaperone cofactor-dependent protein refolding"/>
    <property type="evidence" value="ECO:0000318"/>
    <property type="project" value="GO_Central"/>
</dbReference>
<dbReference type="GO" id="GO:0030218">
    <property type="term" value="P:erythrocyte differentiation"/>
    <property type="evidence" value="ECO:0007669"/>
    <property type="project" value="Ensembl"/>
</dbReference>
<dbReference type="GO" id="GO:0016226">
    <property type="term" value="P:iron-sulfur cluster assembly"/>
    <property type="evidence" value="ECO:0007669"/>
    <property type="project" value="Ensembl"/>
</dbReference>
<dbReference type="GO" id="GO:0045647">
    <property type="term" value="P:negative regulation of erythrocyte differentiation"/>
    <property type="evidence" value="ECO:0007669"/>
    <property type="project" value="Ensembl"/>
</dbReference>
<dbReference type="GO" id="GO:1902037">
    <property type="term" value="P:negative regulation of hematopoietic stem cell differentiation"/>
    <property type="evidence" value="ECO:0007669"/>
    <property type="project" value="Ensembl"/>
</dbReference>
<dbReference type="GO" id="GO:1903707">
    <property type="term" value="P:negative regulation of hemopoiesis"/>
    <property type="evidence" value="ECO:0007669"/>
    <property type="project" value="Ensembl"/>
</dbReference>
<dbReference type="GO" id="GO:0043065">
    <property type="term" value="P:positive regulation of apoptotic process"/>
    <property type="evidence" value="ECO:0007669"/>
    <property type="project" value="Ensembl"/>
</dbReference>
<dbReference type="GO" id="GO:0006611">
    <property type="term" value="P:protein export from nucleus"/>
    <property type="evidence" value="ECO:0007669"/>
    <property type="project" value="Ensembl"/>
</dbReference>
<dbReference type="GO" id="GO:0042026">
    <property type="term" value="P:protein refolding"/>
    <property type="evidence" value="ECO:0000318"/>
    <property type="project" value="GO_Central"/>
</dbReference>
<dbReference type="GO" id="GO:0045646">
    <property type="term" value="P:regulation of erythrocyte differentiation"/>
    <property type="evidence" value="ECO:0000250"/>
    <property type="project" value="UniProtKB"/>
</dbReference>
<dbReference type="GO" id="GO:0051593">
    <property type="term" value="P:response to folic acid"/>
    <property type="evidence" value="ECO:0000270"/>
    <property type="project" value="RGD"/>
</dbReference>
<dbReference type="GO" id="GO:0097068">
    <property type="term" value="P:response to thyroxine"/>
    <property type="evidence" value="ECO:0000270"/>
    <property type="project" value="RGD"/>
</dbReference>
<dbReference type="GO" id="GO:0009636">
    <property type="term" value="P:response to toxic substance"/>
    <property type="evidence" value="ECO:0000270"/>
    <property type="project" value="RGD"/>
</dbReference>
<dbReference type="CDD" id="cd11733">
    <property type="entry name" value="ASKHA_NBD_HSP70_HSPA9"/>
    <property type="match status" value="1"/>
</dbReference>
<dbReference type="FunFam" id="2.60.34.10:FF:000014">
    <property type="entry name" value="Chaperone protein DnaK HSP70"/>
    <property type="match status" value="1"/>
</dbReference>
<dbReference type="FunFam" id="3.30.420.40:FF:000020">
    <property type="entry name" value="Chaperone protein HscA homolog"/>
    <property type="match status" value="1"/>
</dbReference>
<dbReference type="FunFam" id="3.30.30.30:FF:000003">
    <property type="entry name" value="Heat shock protein 9"/>
    <property type="match status" value="1"/>
</dbReference>
<dbReference type="FunFam" id="3.30.420.40:FF:000004">
    <property type="entry name" value="Molecular chaperone DnaK"/>
    <property type="match status" value="1"/>
</dbReference>
<dbReference type="FunFam" id="3.90.640.10:FF:000003">
    <property type="entry name" value="Molecular chaperone DnaK"/>
    <property type="match status" value="1"/>
</dbReference>
<dbReference type="FunFam" id="1.20.1270.10:FF:000011">
    <property type="entry name" value="stress-70 protein, mitochondrial isoform X1"/>
    <property type="match status" value="1"/>
</dbReference>
<dbReference type="Gene3D" id="1.20.1270.10">
    <property type="match status" value="1"/>
</dbReference>
<dbReference type="Gene3D" id="3.30.30.30">
    <property type="match status" value="1"/>
</dbReference>
<dbReference type="Gene3D" id="3.30.420.40">
    <property type="match status" value="2"/>
</dbReference>
<dbReference type="Gene3D" id="3.90.640.10">
    <property type="entry name" value="Actin, Chain A, domain 4"/>
    <property type="match status" value="1"/>
</dbReference>
<dbReference type="Gene3D" id="2.60.34.10">
    <property type="entry name" value="Substrate Binding Domain Of DNAk, Chain A, domain 1"/>
    <property type="match status" value="1"/>
</dbReference>
<dbReference type="HAMAP" id="MF_00332">
    <property type="entry name" value="DnaK"/>
    <property type="match status" value="1"/>
</dbReference>
<dbReference type="InterPro" id="IPR043129">
    <property type="entry name" value="ATPase_NBD"/>
</dbReference>
<dbReference type="InterPro" id="IPR012725">
    <property type="entry name" value="Chaperone_DnaK"/>
</dbReference>
<dbReference type="InterPro" id="IPR018181">
    <property type="entry name" value="Heat_shock_70_CS"/>
</dbReference>
<dbReference type="InterPro" id="IPR029048">
    <property type="entry name" value="HSP70_C_sf"/>
</dbReference>
<dbReference type="InterPro" id="IPR029047">
    <property type="entry name" value="HSP70_peptide-bd_sf"/>
</dbReference>
<dbReference type="InterPro" id="IPR013126">
    <property type="entry name" value="Hsp_70_fam"/>
</dbReference>
<dbReference type="NCBIfam" id="NF001413">
    <property type="entry name" value="PRK00290.1"/>
    <property type="match status" value="1"/>
</dbReference>
<dbReference type="NCBIfam" id="NF003520">
    <property type="entry name" value="PRK05183.1"/>
    <property type="match status" value="1"/>
</dbReference>
<dbReference type="NCBIfam" id="TIGR02350">
    <property type="entry name" value="prok_dnaK"/>
    <property type="match status" value="1"/>
</dbReference>
<dbReference type="PANTHER" id="PTHR19375">
    <property type="entry name" value="HEAT SHOCK PROTEIN 70KDA"/>
    <property type="match status" value="1"/>
</dbReference>
<dbReference type="Pfam" id="PF00012">
    <property type="entry name" value="HSP70"/>
    <property type="match status" value="1"/>
</dbReference>
<dbReference type="PRINTS" id="PR00301">
    <property type="entry name" value="HEATSHOCK70"/>
</dbReference>
<dbReference type="SUPFAM" id="SSF53067">
    <property type="entry name" value="Actin-like ATPase domain"/>
    <property type="match status" value="2"/>
</dbReference>
<dbReference type="SUPFAM" id="SSF100920">
    <property type="entry name" value="Heat shock protein 70kD (HSP70), peptide-binding domain"/>
    <property type="match status" value="1"/>
</dbReference>
<dbReference type="PROSITE" id="PS00297">
    <property type="entry name" value="HSP70_1"/>
    <property type="match status" value="1"/>
</dbReference>
<dbReference type="PROSITE" id="PS00329">
    <property type="entry name" value="HSP70_2"/>
    <property type="match status" value="1"/>
</dbReference>
<dbReference type="PROSITE" id="PS01036">
    <property type="entry name" value="HSP70_3"/>
    <property type="match status" value="1"/>
</dbReference>